<proteinExistence type="inferred from homology"/>
<protein>
    <recommendedName>
        <fullName evidence="1">UvrABC system protein C</fullName>
        <shortName evidence="1">Protein UvrC</shortName>
    </recommendedName>
    <alternativeName>
        <fullName evidence="1">Excinuclease ABC subunit C</fullName>
    </alternativeName>
</protein>
<keyword id="KW-0963">Cytoplasm</keyword>
<keyword id="KW-0227">DNA damage</keyword>
<keyword id="KW-0228">DNA excision</keyword>
<keyword id="KW-0234">DNA repair</keyword>
<keyword id="KW-0267">Excision nuclease</keyword>
<keyword id="KW-0742">SOS response</keyword>
<accession>B7M356</accession>
<comment type="function">
    <text evidence="1">The UvrABC repair system catalyzes the recognition and processing of DNA lesions. UvrC both incises the 5' and 3' sides of the lesion. The N-terminal half is responsible for the 3' incision and the C-terminal half is responsible for the 5' incision.</text>
</comment>
<comment type="subunit">
    <text evidence="1">Interacts with UvrB in an incision complex.</text>
</comment>
<comment type="subcellular location">
    <subcellularLocation>
        <location evidence="1">Cytoplasm</location>
    </subcellularLocation>
</comment>
<comment type="similarity">
    <text evidence="1">Belongs to the UvrC family.</text>
</comment>
<gene>
    <name evidence="1" type="primary">uvrC</name>
    <name type="ordered locus">ECIAI1_1997</name>
</gene>
<evidence type="ECO:0000255" key="1">
    <source>
        <dbReference type="HAMAP-Rule" id="MF_00203"/>
    </source>
</evidence>
<feature type="chain" id="PRO_1000200587" description="UvrABC system protein C">
    <location>
        <begin position="1"/>
        <end position="610"/>
    </location>
</feature>
<feature type="domain" description="GIY-YIG" evidence="1">
    <location>
        <begin position="16"/>
        <end position="94"/>
    </location>
</feature>
<feature type="domain" description="UVR" evidence="1">
    <location>
        <begin position="204"/>
        <end position="239"/>
    </location>
</feature>
<dbReference type="EMBL" id="CU928160">
    <property type="protein sequence ID" value="CAQ98848.1"/>
    <property type="molecule type" value="Genomic_DNA"/>
</dbReference>
<dbReference type="RefSeq" id="WP_001283421.1">
    <property type="nucleotide sequence ID" value="NC_011741.1"/>
</dbReference>
<dbReference type="SMR" id="B7M356"/>
<dbReference type="GeneID" id="93776218"/>
<dbReference type="KEGG" id="ecr:ECIAI1_1997"/>
<dbReference type="HOGENOM" id="CLU_014841_3_0_6"/>
<dbReference type="GO" id="GO:0005737">
    <property type="term" value="C:cytoplasm"/>
    <property type="evidence" value="ECO:0007669"/>
    <property type="project" value="UniProtKB-SubCell"/>
</dbReference>
<dbReference type="GO" id="GO:0009380">
    <property type="term" value="C:excinuclease repair complex"/>
    <property type="evidence" value="ECO:0007669"/>
    <property type="project" value="InterPro"/>
</dbReference>
<dbReference type="GO" id="GO:0003677">
    <property type="term" value="F:DNA binding"/>
    <property type="evidence" value="ECO:0007669"/>
    <property type="project" value="UniProtKB-UniRule"/>
</dbReference>
<dbReference type="GO" id="GO:0009381">
    <property type="term" value="F:excinuclease ABC activity"/>
    <property type="evidence" value="ECO:0007669"/>
    <property type="project" value="UniProtKB-UniRule"/>
</dbReference>
<dbReference type="GO" id="GO:0006289">
    <property type="term" value="P:nucleotide-excision repair"/>
    <property type="evidence" value="ECO:0007669"/>
    <property type="project" value="UniProtKB-UniRule"/>
</dbReference>
<dbReference type="GO" id="GO:0009432">
    <property type="term" value="P:SOS response"/>
    <property type="evidence" value="ECO:0007669"/>
    <property type="project" value="UniProtKB-UniRule"/>
</dbReference>
<dbReference type="CDD" id="cd10434">
    <property type="entry name" value="GIY-YIG_UvrC_Cho"/>
    <property type="match status" value="1"/>
</dbReference>
<dbReference type="FunFam" id="1.10.150.20:FF:000005">
    <property type="entry name" value="UvrABC system protein C"/>
    <property type="match status" value="1"/>
</dbReference>
<dbReference type="FunFam" id="3.30.420.340:FF:000001">
    <property type="entry name" value="UvrABC system protein C"/>
    <property type="match status" value="1"/>
</dbReference>
<dbReference type="FunFam" id="3.40.1440.10:FF:000001">
    <property type="entry name" value="UvrABC system protein C"/>
    <property type="match status" value="1"/>
</dbReference>
<dbReference type="FunFam" id="4.10.860.10:FF:000002">
    <property type="entry name" value="UvrABC system protein C"/>
    <property type="match status" value="1"/>
</dbReference>
<dbReference type="Gene3D" id="1.10.150.20">
    <property type="entry name" value="5' to 3' exonuclease, C-terminal subdomain"/>
    <property type="match status" value="1"/>
</dbReference>
<dbReference type="Gene3D" id="3.40.1440.10">
    <property type="entry name" value="GIY-YIG endonuclease"/>
    <property type="match status" value="1"/>
</dbReference>
<dbReference type="Gene3D" id="4.10.860.10">
    <property type="entry name" value="UVR domain"/>
    <property type="match status" value="1"/>
</dbReference>
<dbReference type="Gene3D" id="3.30.420.340">
    <property type="entry name" value="UvrC, RNAse H endonuclease domain"/>
    <property type="match status" value="1"/>
</dbReference>
<dbReference type="HAMAP" id="MF_00203">
    <property type="entry name" value="UvrC"/>
    <property type="match status" value="1"/>
</dbReference>
<dbReference type="InterPro" id="IPR000305">
    <property type="entry name" value="GIY-YIG_endonuc"/>
</dbReference>
<dbReference type="InterPro" id="IPR035901">
    <property type="entry name" value="GIY-YIG_endonuc_sf"/>
</dbReference>
<dbReference type="InterPro" id="IPR047296">
    <property type="entry name" value="GIY-YIG_UvrC_Cho"/>
</dbReference>
<dbReference type="InterPro" id="IPR003583">
    <property type="entry name" value="Hlx-hairpin-Hlx_DNA-bd_motif"/>
</dbReference>
<dbReference type="InterPro" id="IPR010994">
    <property type="entry name" value="RuvA_2-like"/>
</dbReference>
<dbReference type="InterPro" id="IPR001943">
    <property type="entry name" value="UVR_dom"/>
</dbReference>
<dbReference type="InterPro" id="IPR036876">
    <property type="entry name" value="UVR_dom_sf"/>
</dbReference>
<dbReference type="InterPro" id="IPR050066">
    <property type="entry name" value="UvrABC_protein_C"/>
</dbReference>
<dbReference type="InterPro" id="IPR004791">
    <property type="entry name" value="UvrC"/>
</dbReference>
<dbReference type="InterPro" id="IPR001162">
    <property type="entry name" value="UvrC_RNase_H_dom"/>
</dbReference>
<dbReference type="InterPro" id="IPR038476">
    <property type="entry name" value="UvrC_RNase_H_dom_sf"/>
</dbReference>
<dbReference type="NCBIfam" id="NF001824">
    <property type="entry name" value="PRK00558.1-5"/>
    <property type="match status" value="1"/>
</dbReference>
<dbReference type="NCBIfam" id="TIGR00194">
    <property type="entry name" value="uvrC"/>
    <property type="match status" value="1"/>
</dbReference>
<dbReference type="PANTHER" id="PTHR30562:SF1">
    <property type="entry name" value="UVRABC SYSTEM PROTEIN C"/>
    <property type="match status" value="1"/>
</dbReference>
<dbReference type="PANTHER" id="PTHR30562">
    <property type="entry name" value="UVRC/OXIDOREDUCTASE"/>
    <property type="match status" value="1"/>
</dbReference>
<dbReference type="Pfam" id="PF01541">
    <property type="entry name" value="GIY-YIG"/>
    <property type="match status" value="1"/>
</dbReference>
<dbReference type="Pfam" id="PF14520">
    <property type="entry name" value="HHH_5"/>
    <property type="match status" value="1"/>
</dbReference>
<dbReference type="Pfam" id="PF02151">
    <property type="entry name" value="UVR"/>
    <property type="match status" value="1"/>
</dbReference>
<dbReference type="Pfam" id="PF22920">
    <property type="entry name" value="UvrC_RNaseH"/>
    <property type="match status" value="1"/>
</dbReference>
<dbReference type="Pfam" id="PF08459">
    <property type="entry name" value="UvrC_RNaseH_dom"/>
    <property type="match status" value="1"/>
</dbReference>
<dbReference type="SMART" id="SM00465">
    <property type="entry name" value="GIYc"/>
    <property type="match status" value="1"/>
</dbReference>
<dbReference type="SMART" id="SM00278">
    <property type="entry name" value="HhH1"/>
    <property type="match status" value="2"/>
</dbReference>
<dbReference type="SUPFAM" id="SSF46600">
    <property type="entry name" value="C-terminal UvrC-binding domain of UvrB"/>
    <property type="match status" value="1"/>
</dbReference>
<dbReference type="SUPFAM" id="SSF82771">
    <property type="entry name" value="GIY-YIG endonuclease"/>
    <property type="match status" value="1"/>
</dbReference>
<dbReference type="SUPFAM" id="SSF47781">
    <property type="entry name" value="RuvA domain 2-like"/>
    <property type="match status" value="1"/>
</dbReference>
<dbReference type="PROSITE" id="PS50164">
    <property type="entry name" value="GIY_YIG"/>
    <property type="match status" value="1"/>
</dbReference>
<dbReference type="PROSITE" id="PS50151">
    <property type="entry name" value="UVR"/>
    <property type="match status" value="1"/>
</dbReference>
<dbReference type="PROSITE" id="PS50165">
    <property type="entry name" value="UVRC"/>
    <property type="match status" value="1"/>
</dbReference>
<sequence length="610" mass="68188">MSDQFDAKAFLKTVTSQPGVYRMYDAGGTVIYVGKAKDLKKRLSSYFRSNLASRKTEALVAQIQQIDVTVTHTETEALLLEHNYIKLYQPRYNVLLRDDKSYPFIFLSGDTHPRLAMHRGAKHAKGEYFGPFPNGYAVRETLALLQKIFPIRQCENSVYRNRSRPCLQYQIGRCLGPCVEGLVSEEEYAQQVEYVRLFLSGKDDQVLTQLISRMETASQNLEFEEAARIRDQIQAVRRVTEKQFVSNTGDDLDVIGVAFDAGMACVHVLFIRQGKVLGSRSYFPKVPGGTELSEVVETFVGQFYLQGSQMRTLPGEILLDFNLSDKTLLADSLSELAGRKINVQTKPRGDRARYLKLARTNAATALTSKLSQQSTVHQRLTALASVLKLPEVKRMECFDISHTMGEQTVASCVVFDANGPLRAEYRRYNITGITPGDDYAAMNQVLRRRYGKAIDDSKIPDVILIDGGKGQLAQAKNVFAELDVSWDKNHPLLLGVAKGADRKAGLETLFFEPEGEGFSLPPDSPALHVIQHIRDESHDHAIGGHRKKRAKVKNTSSLETIEGVGPKRRQMLLKYMGGLQGLRNASVEEIAKVPGISQGLAEKIFWSLKH</sequence>
<organism>
    <name type="scientific">Escherichia coli O8 (strain IAI1)</name>
    <dbReference type="NCBI Taxonomy" id="585034"/>
    <lineage>
        <taxon>Bacteria</taxon>
        <taxon>Pseudomonadati</taxon>
        <taxon>Pseudomonadota</taxon>
        <taxon>Gammaproteobacteria</taxon>
        <taxon>Enterobacterales</taxon>
        <taxon>Enterobacteriaceae</taxon>
        <taxon>Escherichia</taxon>
    </lineage>
</organism>
<reference key="1">
    <citation type="journal article" date="2009" name="PLoS Genet.">
        <title>Organised genome dynamics in the Escherichia coli species results in highly diverse adaptive paths.</title>
        <authorList>
            <person name="Touchon M."/>
            <person name="Hoede C."/>
            <person name="Tenaillon O."/>
            <person name="Barbe V."/>
            <person name="Baeriswyl S."/>
            <person name="Bidet P."/>
            <person name="Bingen E."/>
            <person name="Bonacorsi S."/>
            <person name="Bouchier C."/>
            <person name="Bouvet O."/>
            <person name="Calteau A."/>
            <person name="Chiapello H."/>
            <person name="Clermont O."/>
            <person name="Cruveiller S."/>
            <person name="Danchin A."/>
            <person name="Diard M."/>
            <person name="Dossat C."/>
            <person name="Karoui M.E."/>
            <person name="Frapy E."/>
            <person name="Garry L."/>
            <person name="Ghigo J.M."/>
            <person name="Gilles A.M."/>
            <person name="Johnson J."/>
            <person name="Le Bouguenec C."/>
            <person name="Lescat M."/>
            <person name="Mangenot S."/>
            <person name="Martinez-Jehanne V."/>
            <person name="Matic I."/>
            <person name="Nassif X."/>
            <person name="Oztas S."/>
            <person name="Petit M.A."/>
            <person name="Pichon C."/>
            <person name="Rouy Z."/>
            <person name="Ruf C.S."/>
            <person name="Schneider D."/>
            <person name="Tourret J."/>
            <person name="Vacherie B."/>
            <person name="Vallenet D."/>
            <person name="Medigue C."/>
            <person name="Rocha E.P.C."/>
            <person name="Denamur E."/>
        </authorList>
    </citation>
    <scope>NUCLEOTIDE SEQUENCE [LARGE SCALE GENOMIC DNA]</scope>
    <source>
        <strain>IAI1</strain>
    </source>
</reference>
<name>UVRC_ECO8A</name>